<reference key="1">
    <citation type="journal article" date="2005" name="Nature">
        <title>The genome of the social amoeba Dictyostelium discoideum.</title>
        <authorList>
            <person name="Eichinger L."/>
            <person name="Pachebat J.A."/>
            <person name="Gloeckner G."/>
            <person name="Rajandream M.A."/>
            <person name="Sucgang R."/>
            <person name="Berriman M."/>
            <person name="Song J."/>
            <person name="Olsen R."/>
            <person name="Szafranski K."/>
            <person name="Xu Q."/>
            <person name="Tunggal B."/>
            <person name="Kummerfeld S."/>
            <person name="Madera M."/>
            <person name="Konfortov B.A."/>
            <person name="Rivero F."/>
            <person name="Bankier A.T."/>
            <person name="Lehmann R."/>
            <person name="Hamlin N."/>
            <person name="Davies R."/>
            <person name="Gaudet P."/>
            <person name="Fey P."/>
            <person name="Pilcher K."/>
            <person name="Chen G."/>
            <person name="Saunders D."/>
            <person name="Sodergren E.J."/>
            <person name="Davis P."/>
            <person name="Kerhornou A."/>
            <person name="Nie X."/>
            <person name="Hall N."/>
            <person name="Anjard C."/>
            <person name="Hemphill L."/>
            <person name="Bason N."/>
            <person name="Farbrother P."/>
            <person name="Desany B."/>
            <person name="Just E."/>
            <person name="Morio T."/>
            <person name="Rost R."/>
            <person name="Churcher C.M."/>
            <person name="Cooper J."/>
            <person name="Haydock S."/>
            <person name="van Driessche N."/>
            <person name="Cronin A."/>
            <person name="Goodhead I."/>
            <person name="Muzny D.M."/>
            <person name="Mourier T."/>
            <person name="Pain A."/>
            <person name="Lu M."/>
            <person name="Harper D."/>
            <person name="Lindsay R."/>
            <person name="Hauser H."/>
            <person name="James K.D."/>
            <person name="Quiles M."/>
            <person name="Madan Babu M."/>
            <person name="Saito T."/>
            <person name="Buchrieser C."/>
            <person name="Wardroper A."/>
            <person name="Felder M."/>
            <person name="Thangavelu M."/>
            <person name="Johnson D."/>
            <person name="Knights A."/>
            <person name="Loulseged H."/>
            <person name="Mungall K.L."/>
            <person name="Oliver K."/>
            <person name="Price C."/>
            <person name="Quail M.A."/>
            <person name="Urushihara H."/>
            <person name="Hernandez J."/>
            <person name="Rabbinowitsch E."/>
            <person name="Steffen D."/>
            <person name="Sanders M."/>
            <person name="Ma J."/>
            <person name="Kohara Y."/>
            <person name="Sharp S."/>
            <person name="Simmonds M.N."/>
            <person name="Spiegler S."/>
            <person name="Tivey A."/>
            <person name="Sugano S."/>
            <person name="White B."/>
            <person name="Walker D."/>
            <person name="Woodward J.R."/>
            <person name="Winckler T."/>
            <person name="Tanaka Y."/>
            <person name="Shaulsky G."/>
            <person name="Schleicher M."/>
            <person name="Weinstock G.M."/>
            <person name="Rosenthal A."/>
            <person name="Cox E.C."/>
            <person name="Chisholm R.L."/>
            <person name="Gibbs R.A."/>
            <person name="Loomis W.F."/>
            <person name="Platzer M."/>
            <person name="Kay R.R."/>
            <person name="Williams J.G."/>
            <person name="Dear P.H."/>
            <person name="Noegel A.A."/>
            <person name="Barrell B.G."/>
            <person name="Kuspa A."/>
        </authorList>
    </citation>
    <scope>NUCLEOTIDE SEQUENCE [LARGE SCALE GENOMIC DNA]</scope>
    <source>
        <strain>AX4</strain>
    </source>
</reference>
<reference key="2">
    <citation type="journal article" date="2006" name="J. Proteome Res.">
        <title>Identification of novel centrosomal proteins in Dictyostelium discoideum by comparative proteomic approaches.</title>
        <authorList>
            <person name="Reinders Y."/>
            <person name="Schulz I."/>
            <person name="Graef R."/>
            <person name="Sickmann A."/>
        </authorList>
    </citation>
    <scope>IDENTIFICATION BY MASS SPECTROMETRY [LARGE SCALE ANALYSIS]</scope>
</reference>
<comment type="function">
    <text evidence="1">The coatomer is a cytosolic protein complex that binds to dilysine motifs and reversibly associates with Golgi non-clathrin-coated vesicles, which further mediate biosynthetic protein transport from the ER, via the Golgi up to the trans Golgi network. Coatomer complex is required for budding from Golgi membranes, and is essential for the retrograde Golgi-to-ER transport of dilysine-tagged proteins (By similarity).</text>
</comment>
<comment type="subunit">
    <text evidence="1">Oligomeric complex that consists of at least the alpha, beta, beta', gamma, delta, epsilon and zeta subunits.</text>
</comment>
<comment type="subcellular location">
    <subcellularLocation>
        <location evidence="1">Cytoplasm</location>
    </subcellularLocation>
    <subcellularLocation>
        <location evidence="1">Golgi apparatus membrane</location>
        <topology evidence="1">Peripheral membrane protein</topology>
        <orientation evidence="1">Cytoplasmic side</orientation>
    </subcellularLocation>
    <subcellularLocation>
        <location evidence="1">Cytoplasmic vesicle</location>
        <location evidence="1">COPI-coated vesicle membrane</location>
        <topology evidence="1">Peripheral membrane protein</topology>
        <orientation evidence="1">Cytoplasmic side</orientation>
    </subcellularLocation>
    <text evidence="1">The coatomer is cytoplasmic or polymerized on the cytoplasmic side of the Golgi, as well as on the vesicles/buds originating from it.</text>
</comment>
<comment type="similarity">
    <text evidence="3">Belongs to the COPG family.</text>
</comment>
<organism>
    <name type="scientific">Dictyostelium discoideum</name>
    <name type="common">Social amoeba</name>
    <dbReference type="NCBI Taxonomy" id="44689"/>
    <lineage>
        <taxon>Eukaryota</taxon>
        <taxon>Amoebozoa</taxon>
        <taxon>Evosea</taxon>
        <taxon>Eumycetozoa</taxon>
        <taxon>Dictyostelia</taxon>
        <taxon>Dictyosteliales</taxon>
        <taxon>Dictyosteliaceae</taxon>
        <taxon>Dictyostelium</taxon>
    </lineage>
</organism>
<protein>
    <recommendedName>
        <fullName>Coatomer subunit gamma</fullName>
    </recommendedName>
    <alternativeName>
        <fullName>Gamma-coat protein</fullName>
        <shortName>Gamma-COP</shortName>
    </alternativeName>
</protein>
<evidence type="ECO:0000250" key="1"/>
<evidence type="ECO:0000256" key="2">
    <source>
        <dbReference type="SAM" id="MobiDB-lite"/>
    </source>
</evidence>
<evidence type="ECO:0000305" key="3"/>
<keyword id="KW-0963">Cytoplasm</keyword>
<keyword id="KW-0968">Cytoplasmic vesicle</keyword>
<keyword id="KW-0931">ER-Golgi transport</keyword>
<keyword id="KW-0333">Golgi apparatus</keyword>
<keyword id="KW-0472">Membrane</keyword>
<keyword id="KW-0653">Protein transport</keyword>
<keyword id="KW-1185">Reference proteome</keyword>
<keyword id="KW-0677">Repeat</keyword>
<keyword id="KW-0813">Transport</keyword>
<name>COPG_DICDI</name>
<proteinExistence type="evidence at protein level"/>
<sequence>MASRVQKKDDDESDFLFENLDKGQVIQEKRAFNESPIHPRKCSLVISQFLYLLSRGDSFTKTEATDIFFAATKLFQSKDIPLRRLMYLLLKELSTISQDAIIVISSLTKDMSHKIELYRANAIRILCKITDSSILPQIERYFKQSIVEKDPHVSSAALVSSIHLLKVCPEIVKRWANEVQEAISNKSNMVQYHALALLHRIKQHDRLAVSKLVSNLIKNSLRSPYAQSYLIRCCVEVIEETNTEDRIFREYIESCLRSKNEMVAYEAARSICTFKNVSNKEINSAVGVLQNFLNSTKPTLRFAAVRTLNKLAQTNPTAVIPCNLDMENLITDTNRSIATLAITTLLKVGNESNVERLIKQIANFLGDINDEFKIVVVDAITSLSQKFPKKYKHLIIFLNKILRDEGTLQLKQATLDAILTVVNNIPESKEIALTELCDYIEDCDFPDLSVQILHLIGQEGPLTSSPAQYMRYIYNRVLLDGGIIRAAAVTSIAKFGLLYEPMKEKVVILLQRCLLDEDDEVRDRATLYLKLFKENDVRYLNKVLMDDVPVPLNNLQKSLELYLHQGDFSEPFDIASVSTVVETYQSPLLGDGKSPFSTGASKKGDSVTGTPKSNNASNNNNNNEESSGPESFATKLSQIPQFSTFGKLLKSSEYIELTETETEYVVNCVKHIYREHIVFQFNCTNTLNEQQLSNVSVKMVPSDPKLLKYECSIPIDVLPYGEPQQCYVAIRYIPANGYPLCSFSNALKFKVKEVDPSTGELDEPGYDDQYSLERLEIVPKDFLNRAFVGNFSEEWKKMSEDTQLVQTFSLVGVKSIDEAVKQIIKTLGMAPAEKSEVVTPKSAKHILYLTGKSLNNQLIYVRARMKLDQSQTNTDVELTIKSDDESLNDFVISAFIEK</sequence>
<feature type="chain" id="PRO_0000327839" description="Coatomer subunit gamma">
    <location>
        <begin position="1"/>
        <end position="898"/>
    </location>
</feature>
<feature type="repeat" description="HEAT 1">
    <location>
        <begin position="62"/>
        <end position="99"/>
    </location>
</feature>
<feature type="repeat" description="HEAT 2">
    <location>
        <begin position="170"/>
        <end position="207"/>
    </location>
</feature>
<feature type="repeat" description="HEAT 3">
    <location>
        <begin position="280"/>
        <end position="317"/>
    </location>
</feature>
<feature type="repeat" description="HEAT 4">
    <location>
        <begin position="319"/>
        <end position="352"/>
    </location>
</feature>
<feature type="repeat" description="HEAT 5">
    <location>
        <begin position="353"/>
        <end position="389"/>
    </location>
</feature>
<feature type="repeat" description="HEAT 6">
    <location>
        <begin position="392"/>
        <end position="427"/>
    </location>
</feature>
<feature type="region of interest" description="Disordered" evidence="2">
    <location>
        <begin position="592"/>
        <end position="631"/>
    </location>
</feature>
<feature type="compositionally biased region" description="Low complexity" evidence="2">
    <location>
        <begin position="613"/>
        <end position="626"/>
    </location>
</feature>
<gene>
    <name type="primary">copG</name>
    <name type="ORF">DDB_G0289371</name>
</gene>
<accession>Q54HL0</accession>
<dbReference type="EMBL" id="AAFI02000139">
    <property type="protein sequence ID" value="EAL62772.1"/>
    <property type="molecule type" value="Genomic_DNA"/>
</dbReference>
<dbReference type="RefSeq" id="XP_636291.1">
    <property type="nucleotide sequence ID" value="XM_631199.1"/>
</dbReference>
<dbReference type="SMR" id="Q54HL0"/>
<dbReference type="FunCoup" id="Q54HL0">
    <property type="interactions" value="1350"/>
</dbReference>
<dbReference type="IntAct" id="Q54HL0">
    <property type="interactions" value="1"/>
</dbReference>
<dbReference type="STRING" id="44689.Q54HL0"/>
<dbReference type="PaxDb" id="44689-DDB0233801"/>
<dbReference type="EnsemblProtists" id="EAL62772">
    <property type="protein sequence ID" value="EAL62772"/>
    <property type="gene ID" value="DDB_G0289371"/>
</dbReference>
<dbReference type="GeneID" id="8627109"/>
<dbReference type="KEGG" id="ddi:DDB_G0289371"/>
<dbReference type="dictyBase" id="DDB_G0289371">
    <property type="gene designation" value="copG"/>
</dbReference>
<dbReference type="VEuPathDB" id="AmoebaDB:DDB_G0289371"/>
<dbReference type="eggNOG" id="KOG1078">
    <property type="taxonomic scope" value="Eukaryota"/>
</dbReference>
<dbReference type="HOGENOM" id="CLU_010353_2_0_1"/>
<dbReference type="InParanoid" id="Q54HL0"/>
<dbReference type="OMA" id="DFIEDCE"/>
<dbReference type="PhylomeDB" id="Q54HL0"/>
<dbReference type="Reactome" id="R-DDI-6807878">
    <property type="pathway name" value="COPI-mediated anterograde transport"/>
</dbReference>
<dbReference type="Reactome" id="R-DDI-6811434">
    <property type="pathway name" value="COPI-dependent Golgi-to-ER retrograde traffic"/>
</dbReference>
<dbReference type="PRO" id="PR:Q54HL0"/>
<dbReference type="Proteomes" id="UP000002195">
    <property type="component" value="Chromosome 5"/>
</dbReference>
<dbReference type="GO" id="GO:0030126">
    <property type="term" value="C:COPI vesicle coat"/>
    <property type="evidence" value="ECO:0000250"/>
    <property type="project" value="dictyBase"/>
</dbReference>
<dbReference type="GO" id="GO:0005783">
    <property type="term" value="C:endoplasmic reticulum"/>
    <property type="evidence" value="ECO:0000318"/>
    <property type="project" value="GO_Central"/>
</dbReference>
<dbReference type="GO" id="GO:0005793">
    <property type="term" value="C:endoplasmic reticulum-Golgi intermediate compartment"/>
    <property type="evidence" value="ECO:0000318"/>
    <property type="project" value="GO_Central"/>
</dbReference>
<dbReference type="GO" id="GO:0000139">
    <property type="term" value="C:Golgi membrane"/>
    <property type="evidence" value="ECO:0000318"/>
    <property type="project" value="GO_Central"/>
</dbReference>
<dbReference type="GO" id="GO:0005198">
    <property type="term" value="F:structural molecule activity"/>
    <property type="evidence" value="ECO:0007669"/>
    <property type="project" value="InterPro"/>
</dbReference>
<dbReference type="GO" id="GO:0006888">
    <property type="term" value="P:endoplasmic reticulum to Golgi vesicle-mediated transport"/>
    <property type="evidence" value="ECO:0000318"/>
    <property type="project" value="GO_Central"/>
</dbReference>
<dbReference type="GO" id="GO:0006891">
    <property type="term" value="P:intra-Golgi vesicle-mediated transport"/>
    <property type="evidence" value="ECO:0000318"/>
    <property type="project" value="GO_Central"/>
</dbReference>
<dbReference type="GO" id="GO:0006886">
    <property type="term" value="P:intracellular protein transport"/>
    <property type="evidence" value="ECO:0007669"/>
    <property type="project" value="InterPro"/>
</dbReference>
<dbReference type="GO" id="GO:0009306">
    <property type="term" value="P:protein secretion"/>
    <property type="evidence" value="ECO:0000318"/>
    <property type="project" value="GO_Central"/>
</dbReference>
<dbReference type="FunFam" id="1.25.10.10:FF:000071">
    <property type="entry name" value="Coatomer subunit gamma"/>
    <property type="match status" value="1"/>
</dbReference>
<dbReference type="FunFam" id="1.25.10.10:FF:000382">
    <property type="entry name" value="Coatomer subunit gamma"/>
    <property type="match status" value="1"/>
</dbReference>
<dbReference type="FunFam" id="2.60.40.1480:FF:000002">
    <property type="entry name" value="Coatomer subunit gamma"/>
    <property type="match status" value="1"/>
</dbReference>
<dbReference type="FunFam" id="3.30.310.10:FF:000011">
    <property type="entry name" value="Coatomer subunit gamma"/>
    <property type="match status" value="1"/>
</dbReference>
<dbReference type="Gene3D" id="2.60.40.1480">
    <property type="entry name" value="Coatomer, gamma subunit, appendage domain"/>
    <property type="match status" value="1"/>
</dbReference>
<dbReference type="Gene3D" id="1.25.10.10">
    <property type="entry name" value="Leucine-rich Repeat Variant"/>
    <property type="match status" value="1"/>
</dbReference>
<dbReference type="Gene3D" id="3.30.310.10">
    <property type="entry name" value="TATA-Binding Protein"/>
    <property type="match status" value="1"/>
</dbReference>
<dbReference type="InterPro" id="IPR011989">
    <property type="entry name" value="ARM-like"/>
</dbReference>
<dbReference type="InterPro" id="IPR016024">
    <property type="entry name" value="ARM-type_fold"/>
</dbReference>
<dbReference type="InterPro" id="IPR002553">
    <property type="entry name" value="Clathrin/coatomer_adapt-like_N"/>
</dbReference>
<dbReference type="InterPro" id="IPR013041">
    <property type="entry name" value="Clathrin_app_Ig-like_sf"/>
</dbReference>
<dbReference type="InterPro" id="IPR009028">
    <property type="entry name" value="Coatomer/calthrin_app_sub_C"/>
</dbReference>
<dbReference type="InterPro" id="IPR032154">
    <property type="entry name" value="Coatomer_g_Cpla"/>
</dbReference>
<dbReference type="InterPro" id="IPR017106">
    <property type="entry name" value="Coatomer_gsu"/>
</dbReference>
<dbReference type="InterPro" id="IPR013040">
    <property type="entry name" value="Coatomer_gsu_app_Ig-like_dom"/>
</dbReference>
<dbReference type="InterPro" id="IPR037067">
    <property type="entry name" value="Coatomer_gsu_app_sf"/>
</dbReference>
<dbReference type="InterPro" id="IPR012295">
    <property type="entry name" value="TBP_dom_sf"/>
</dbReference>
<dbReference type="PANTHER" id="PTHR10261">
    <property type="entry name" value="COATOMER SUBUNIT GAMMA"/>
    <property type="match status" value="1"/>
</dbReference>
<dbReference type="PANTHER" id="PTHR10261:SF0">
    <property type="entry name" value="COATOMER SUBUNIT GAMMA-2"/>
    <property type="match status" value="1"/>
</dbReference>
<dbReference type="Pfam" id="PF01602">
    <property type="entry name" value="Adaptin_N"/>
    <property type="match status" value="1"/>
</dbReference>
<dbReference type="Pfam" id="PF16381">
    <property type="entry name" value="Coatomer_g_Cpla"/>
    <property type="match status" value="1"/>
</dbReference>
<dbReference type="Pfam" id="PF08752">
    <property type="entry name" value="COP-gamma_platf"/>
    <property type="match status" value="1"/>
</dbReference>
<dbReference type="PIRSF" id="PIRSF037093">
    <property type="entry name" value="Coatomer_gamma_subunit"/>
    <property type="match status" value="1"/>
</dbReference>
<dbReference type="SUPFAM" id="SSF48371">
    <property type="entry name" value="ARM repeat"/>
    <property type="match status" value="1"/>
</dbReference>
<dbReference type="SUPFAM" id="SSF49348">
    <property type="entry name" value="Clathrin adaptor appendage domain"/>
    <property type="match status" value="1"/>
</dbReference>
<dbReference type="SUPFAM" id="SSF55711">
    <property type="entry name" value="Subdomain of clathrin and coatomer appendage domain"/>
    <property type="match status" value="1"/>
</dbReference>